<organism>
    <name type="scientific">Arabidopsis thaliana</name>
    <name type="common">Mouse-ear cress</name>
    <dbReference type="NCBI Taxonomy" id="3702"/>
    <lineage>
        <taxon>Eukaryota</taxon>
        <taxon>Viridiplantae</taxon>
        <taxon>Streptophyta</taxon>
        <taxon>Embryophyta</taxon>
        <taxon>Tracheophyta</taxon>
        <taxon>Spermatophyta</taxon>
        <taxon>Magnoliopsida</taxon>
        <taxon>eudicotyledons</taxon>
        <taxon>Gunneridae</taxon>
        <taxon>Pentapetalae</taxon>
        <taxon>rosids</taxon>
        <taxon>malvids</taxon>
        <taxon>Brassicales</taxon>
        <taxon>Brassicaceae</taxon>
        <taxon>Camelineae</taxon>
        <taxon>Arabidopsis</taxon>
    </lineage>
</organism>
<gene>
    <name type="primary">PRN1</name>
    <name type="ordered locus">At3g59220</name>
    <name type="ORF">F25L23_80</name>
</gene>
<protein>
    <recommendedName>
        <fullName>Pirin-1</fullName>
    </recommendedName>
    <alternativeName>
        <fullName>AtPirin1</fullName>
    </alternativeName>
</protein>
<sequence length="287" mass="31603">MTYENNSVPRIVIKKVLAKLEKEGEGAVVRNGITKIDQKLLDPFVLLVEFSFSLSAGFPDHPHRGFESVTYMLQGGIIHKDPKGHKGTIQAGDVQWMTAGRGIIHSEFPEEEVNNGLQLWINLPSTEKMTEPKYKELSSLDIPRAEENGVEVKVIAGDSMGIKSPVYTRTPTMFLDFTLKPGSQTHQTVPESWTAFAYIIEGDEGVFGSLNSSAISAHHVVVFGPGDLVSVWNKSTSRSLRFLLIAGEPIGEPVVQCGPFVMNSQAEIDMAFDDYQNAKNGFEMAKC</sequence>
<comment type="function">
    <text evidence="3">Involved in abscisic acid signal transduction. Plays a role in seed germination and early seedling development. Involved in the blue light (BL) signaling.</text>
</comment>
<comment type="subunit">
    <text evidence="2 3">Interacts with the G protein alpha-1 subunit GPA1. Interacts with NFYB6 and NFYB9.</text>
</comment>
<comment type="interaction">
    <interactant intactId="EBI-1606661">
        <id>Q9LX49</id>
    </interactant>
    <interactant intactId="EBI-443890">
        <id>P18064</id>
        <label>GPA1</label>
    </interactant>
    <organismsDiffer>false</organismsDiffer>
    <experiments>3</experiments>
</comment>
<comment type="interaction">
    <interactant intactId="EBI-1606661">
        <id>Q9LX49</id>
    </interactant>
    <interactant intactId="EBI-1751677">
        <id>O04027</id>
        <label>NFYB4</label>
    </interactant>
    <organismsDiffer>false</organismsDiffer>
    <experiments>2</experiments>
</comment>
<comment type="interaction">
    <interactant intactId="EBI-1606661">
        <id>Q9LX49</id>
    </interactant>
    <interactant intactId="EBI-1751693">
        <id>Q84W66</id>
        <label>NFYB6</label>
    </interactant>
    <organismsDiffer>false</organismsDiffer>
    <experiments>2</experiments>
</comment>
<comment type="subcellular location">
    <subcellularLocation>
        <location evidence="1">Nucleus</location>
    </subcellularLocation>
</comment>
<comment type="developmental stage">
    <text>Present at similar levels in seedlings and mature plants.</text>
</comment>
<comment type="induction">
    <text>Up-regulated by abscisic acid (ABA) and low-fluence red light, but not by low-fluence blue light.</text>
</comment>
<comment type="domain">
    <text>Contains one cupin domain that is not required for interaction with the G protein alpha subunit.</text>
</comment>
<comment type="disruption phenotype">
    <text evidence="3">Altered response to blue light (BL) and abscisic acid (ABA).</text>
</comment>
<comment type="similarity">
    <text evidence="4">Belongs to the pirin family.</text>
</comment>
<feature type="initiator methionine" description="Removed" evidence="5">
    <location>
        <position position="1"/>
    </location>
</feature>
<feature type="chain" id="PRO_0000214054" description="Pirin-1">
    <location>
        <begin position="2"/>
        <end position="287"/>
    </location>
</feature>
<feature type="modified residue" description="N-acetylthreonine" evidence="5">
    <location>
        <position position="2"/>
    </location>
</feature>
<accession>Q9LX49</accession>
<dbReference type="EMBL" id="AF353716">
    <property type="protein sequence ID" value="AAL83949.1"/>
    <property type="molecule type" value="mRNA"/>
</dbReference>
<dbReference type="EMBL" id="AL356014">
    <property type="protein sequence ID" value="CAB91592.1"/>
    <property type="molecule type" value="Genomic_DNA"/>
</dbReference>
<dbReference type="EMBL" id="CP002686">
    <property type="protein sequence ID" value="AEE79893.1"/>
    <property type="molecule type" value="Genomic_DNA"/>
</dbReference>
<dbReference type="PIR" id="T48990">
    <property type="entry name" value="T48990"/>
</dbReference>
<dbReference type="RefSeq" id="NP_191481.1">
    <property type="nucleotide sequence ID" value="NM_115784.3"/>
</dbReference>
<dbReference type="SMR" id="Q9LX49"/>
<dbReference type="BioGRID" id="10406">
    <property type="interactions" value="22"/>
</dbReference>
<dbReference type="FunCoup" id="Q9LX49">
    <property type="interactions" value="99"/>
</dbReference>
<dbReference type="IntAct" id="Q9LX49">
    <property type="interactions" value="4"/>
</dbReference>
<dbReference type="STRING" id="3702.Q9LX49"/>
<dbReference type="iPTMnet" id="Q9LX49"/>
<dbReference type="PaxDb" id="3702-AT3G59220.1"/>
<dbReference type="ProteomicsDB" id="234707"/>
<dbReference type="DNASU" id="825091"/>
<dbReference type="EnsemblPlants" id="AT3G59220.1">
    <property type="protein sequence ID" value="AT3G59220.1"/>
    <property type="gene ID" value="AT3G59220"/>
</dbReference>
<dbReference type="GeneID" id="825091"/>
<dbReference type="Gramene" id="AT3G59220.1">
    <property type="protein sequence ID" value="AT3G59220.1"/>
    <property type="gene ID" value="AT3G59220"/>
</dbReference>
<dbReference type="KEGG" id="ath:AT3G59220"/>
<dbReference type="Araport" id="AT3G59220"/>
<dbReference type="TAIR" id="AT3G59220">
    <property type="gene designation" value="PRN"/>
</dbReference>
<dbReference type="eggNOG" id="ENOG502QQ5A">
    <property type="taxonomic scope" value="Eukaryota"/>
</dbReference>
<dbReference type="HOGENOM" id="CLU_045717_5_2_1"/>
<dbReference type="InParanoid" id="Q9LX49"/>
<dbReference type="OMA" id="HMGLQTV"/>
<dbReference type="OrthoDB" id="198735at2759"/>
<dbReference type="PhylomeDB" id="Q9LX49"/>
<dbReference type="PRO" id="PR:Q9LX49"/>
<dbReference type="Proteomes" id="UP000006548">
    <property type="component" value="Chromosome 3"/>
</dbReference>
<dbReference type="ExpressionAtlas" id="Q9LX49">
    <property type="expression patterns" value="baseline and differential"/>
</dbReference>
<dbReference type="GO" id="GO:0005634">
    <property type="term" value="C:nucleus"/>
    <property type="evidence" value="ECO:0007669"/>
    <property type="project" value="UniProtKB-SubCell"/>
</dbReference>
<dbReference type="GO" id="GO:0009738">
    <property type="term" value="P:abscisic acid-activated signaling pathway"/>
    <property type="evidence" value="ECO:0000315"/>
    <property type="project" value="UniProtKB"/>
</dbReference>
<dbReference type="GO" id="GO:0009785">
    <property type="term" value="P:blue light signaling pathway"/>
    <property type="evidence" value="ECO:0000315"/>
    <property type="project" value="UniProtKB"/>
</dbReference>
<dbReference type="GO" id="GO:0009737">
    <property type="term" value="P:response to abscisic acid"/>
    <property type="evidence" value="ECO:0000315"/>
    <property type="project" value="TAIR"/>
</dbReference>
<dbReference type="CDD" id="cd02247">
    <property type="entry name" value="cupin_pirin_C"/>
    <property type="match status" value="1"/>
</dbReference>
<dbReference type="CDD" id="cd02909">
    <property type="entry name" value="cupin_pirin_N"/>
    <property type="match status" value="1"/>
</dbReference>
<dbReference type="FunFam" id="2.60.120.10:FF:000214">
    <property type="entry name" value="Pirin-like protein 2"/>
    <property type="match status" value="1"/>
</dbReference>
<dbReference type="Gene3D" id="2.60.120.10">
    <property type="entry name" value="Jelly Rolls"/>
    <property type="match status" value="2"/>
</dbReference>
<dbReference type="InterPro" id="IPR012093">
    <property type="entry name" value="Pirin"/>
</dbReference>
<dbReference type="InterPro" id="IPR008778">
    <property type="entry name" value="Pirin_C_dom"/>
</dbReference>
<dbReference type="InterPro" id="IPR003829">
    <property type="entry name" value="Pirin_N_dom"/>
</dbReference>
<dbReference type="InterPro" id="IPR014710">
    <property type="entry name" value="RmlC-like_jellyroll"/>
</dbReference>
<dbReference type="InterPro" id="IPR011051">
    <property type="entry name" value="RmlC_Cupin_sf"/>
</dbReference>
<dbReference type="PANTHER" id="PTHR13903:SF22">
    <property type="entry name" value="PIRIN-1"/>
    <property type="match status" value="1"/>
</dbReference>
<dbReference type="PANTHER" id="PTHR13903">
    <property type="entry name" value="PIRIN-RELATED"/>
    <property type="match status" value="1"/>
</dbReference>
<dbReference type="Pfam" id="PF02678">
    <property type="entry name" value="Pirin"/>
    <property type="match status" value="1"/>
</dbReference>
<dbReference type="Pfam" id="PF05726">
    <property type="entry name" value="Pirin_C"/>
    <property type="match status" value="1"/>
</dbReference>
<dbReference type="PIRSF" id="PIRSF006232">
    <property type="entry name" value="Pirin"/>
    <property type="match status" value="1"/>
</dbReference>
<dbReference type="SUPFAM" id="SSF51182">
    <property type="entry name" value="RmlC-like cupins"/>
    <property type="match status" value="1"/>
</dbReference>
<evidence type="ECO:0000250" key="1"/>
<evidence type="ECO:0000269" key="2">
    <source>
    </source>
</evidence>
<evidence type="ECO:0000269" key="3">
    <source>
    </source>
</evidence>
<evidence type="ECO:0000305" key="4"/>
<evidence type="ECO:0007744" key="5">
    <source>
    </source>
</evidence>
<reference key="1">
    <citation type="submission" date="2001-02" db="EMBL/GenBank/DDBJ databases">
        <title>Pirin, a highly conserved protein essential for Arabidopsis development, interacts with the MET1/DNMT1 class of DNA methyltransferases.</title>
        <authorList>
            <person name="Zilberman D."/>
            <person name="Jacobsen S.E."/>
        </authorList>
    </citation>
    <scope>NUCLEOTIDE SEQUENCE [MRNA]</scope>
    <source>
        <strain>cv. Columbia</strain>
    </source>
</reference>
<reference key="2">
    <citation type="journal article" date="2000" name="Nature">
        <title>Sequence and analysis of chromosome 3 of the plant Arabidopsis thaliana.</title>
        <authorList>
            <person name="Salanoubat M."/>
            <person name="Lemcke K."/>
            <person name="Rieger M."/>
            <person name="Ansorge W."/>
            <person name="Unseld M."/>
            <person name="Fartmann B."/>
            <person name="Valle G."/>
            <person name="Bloecker H."/>
            <person name="Perez-Alonso M."/>
            <person name="Obermaier B."/>
            <person name="Delseny M."/>
            <person name="Boutry M."/>
            <person name="Grivell L.A."/>
            <person name="Mache R."/>
            <person name="Puigdomenech P."/>
            <person name="De Simone V."/>
            <person name="Choisne N."/>
            <person name="Artiguenave F."/>
            <person name="Robert C."/>
            <person name="Brottier P."/>
            <person name="Wincker P."/>
            <person name="Cattolico L."/>
            <person name="Weissenbach J."/>
            <person name="Saurin W."/>
            <person name="Quetier F."/>
            <person name="Schaefer M."/>
            <person name="Mueller-Auer S."/>
            <person name="Gabel C."/>
            <person name="Fuchs M."/>
            <person name="Benes V."/>
            <person name="Wurmbach E."/>
            <person name="Drzonek H."/>
            <person name="Erfle H."/>
            <person name="Jordan N."/>
            <person name="Bangert S."/>
            <person name="Wiedelmann R."/>
            <person name="Kranz H."/>
            <person name="Voss H."/>
            <person name="Holland R."/>
            <person name="Brandt P."/>
            <person name="Nyakatura G."/>
            <person name="Vezzi A."/>
            <person name="D'Angelo M."/>
            <person name="Pallavicini A."/>
            <person name="Toppo S."/>
            <person name="Simionati B."/>
            <person name="Conrad A."/>
            <person name="Hornischer K."/>
            <person name="Kauer G."/>
            <person name="Loehnert T.-H."/>
            <person name="Nordsiek G."/>
            <person name="Reichelt J."/>
            <person name="Scharfe M."/>
            <person name="Schoen O."/>
            <person name="Bargues M."/>
            <person name="Terol J."/>
            <person name="Climent J."/>
            <person name="Navarro P."/>
            <person name="Collado C."/>
            <person name="Perez-Perez A."/>
            <person name="Ottenwaelder B."/>
            <person name="Duchemin D."/>
            <person name="Cooke R."/>
            <person name="Laudie M."/>
            <person name="Berger-Llauro C."/>
            <person name="Purnelle B."/>
            <person name="Masuy D."/>
            <person name="de Haan M."/>
            <person name="Maarse A.C."/>
            <person name="Alcaraz J.-P."/>
            <person name="Cottet A."/>
            <person name="Casacuberta E."/>
            <person name="Monfort A."/>
            <person name="Argiriou A."/>
            <person name="Flores M."/>
            <person name="Liguori R."/>
            <person name="Vitale D."/>
            <person name="Mannhaupt G."/>
            <person name="Haase D."/>
            <person name="Schoof H."/>
            <person name="Rudd S."/>
            <person name="Zaccaria P."/>
            <person name="Mewes H.-W."/>
            <person name="Mayer K.F.X."/>
            <person name="Kaul S."/>
            <person name="Town C.D."/>
            <person name="Koo H.L."/>
            <person name="Tallon L.J."/>
            <person name="Jenkins J."/>
            <person name="Rooney T."/>
            <person name="Rizzo M."/>
            <person name="Walts A."/>
            <person name="Utterback T."/>
            <person name="Fujii C.Y."/>
            <person name="Shea T.P."/>
            <person name="Creasy T.H."/>
            <person name="Haas B."/>
            <person name="Maiti R."/>
            <person name="Wu D."/>
            <person name="Peterson J."/>
            <person name="Van Aken S."/>
            <person name="Pai G."/>
            <person name="Militscher J."/>
            <person name="Sellers P."/>
            <person name="Gill J.E."/>
            <person name="Feldblyum T.V."/>
            <person name="Preuss D."/>
            <person name="Lin X."/>
            <person name="Nierman W.C."/>
            <person name="Salzberg S.L."/>
            <person name="White O."/>
            <person name="Venter J.C."/>
            <person name="Fraser C.M."/>
            <person name="Kaneko T."/>
            <person name="Nakamura Y."/>
            <person name="Sato S."/>
            <person name="Kato T."/>
            <person name="Asamizu E."/>
            <person name="Sasamoto S."/>
            <person name="Kimura T."/>
            <person name="Idesawa K."/>
            <person name="Kawashima K."/>
            <person name="Kishida Y."/>
            <person name="Kiyokawa C."/>
            <person name="Kohara M."/>
            <person name="Matsumoto M."/>
            <person name="Matsuno A."/>
            <person name="Muraki A."/>
            <person name="Nakayama S."/>
            <person name="Nakazaki N."/>
            <person name="Shinpo S."/>
            <person name="Takeuchi C."/>
            <person name="Wada T."/>
            <person name="Watanabe A."/>
            <person name="Yamada M."/>
            <person name="Yasuda M."/>
            <person name="Tabata S."/>
        </authorList>
    </citation>
    <scope>NUCLEOTIDE SEQUENCE [LARGE SCALE GENOMIC DNA]</scope>
    <source>
        <strain>cv. Columbia</strain>
    </source>
</reference>
<reference key="3">
    <citation type="journal article" date="2017" name="Plant J.">
        <title>Araport11: a complete reannotation of the Arabidopsis thaliana reference genome.</title>
        <authorList>
            <person name="Cheng C.Y."/>
            <person name="Krishnakumar V."/>
            <person name="Chan A.P."/>
            <person name="Thibaud-Nissen F."/>
            <person name="Schobel S."/>
            <person name="Town C.D."/>
        </authorList>
    </citation>
    <scope>GENOME REANNOTATION</scope>
    <source>
        <strain>cv. Columbia</strain>
    </source>
</reference>
<reference key="4">
    <citation type="journal article" date="2003" name="Plant Cell">
        <title>The Arabidopsis cupin domain protein AtPirin1 interacts with the G protein alpha-subunit GPA1 and regulates seed germination and early seedling development.</title>
        <authorList>
            <person name="Lapik Y.R."/>
            <person name="Kaufman L.S."/>
        </authorList>
    </citation>
    <scope>CHARACTERIZATION</scope>
    <scope>INTERACTION WITH GPA1</scope>
    <source>
        <strain>cv. Wassilewskija</strain>
    </source>
</reference>
<reference key="5">
    <citation type="journal article" date="2007" name="Plant Physiol.">
        <title>The GCR1, GPA1, PRN1, NF-Y signal chain mediates both blue light and abscisic acid responses in Arabidopsis.</title>
        <authorList>
            <person name="Warpeha K.M."/>
            <person name="Upadhyay S."/>
            <person name="Yeh J."/>
            <person name="Adamiak J."/>
            <person name="Hawkins S.I."/>
            <person name="Lapik Y.R."/>
            <person name="Anderson M.B."/>
            <person name="Kaufman L.S."/>
        </authorList>
    </citation>
    <scope>FUNCTION</scope>
    <scope>DISRUPTION PHENOTYPE</scope>
    <scope>INTERACTION WITH NFYB6 AND NFYB9</scope>
    <source>
        <strain>cv. Columbia</strain>
        <strain>cv. Wassilewskija</strain>
    </source>
</reference>
<reference key="6">
    <citation type="journal article" date="2012" name="Mol. Cell. Proteomics">
        <title>Comparative large-scale characterisation of plant vs. mammal proteins reveals similar and idiosyncratic N-alpha acetylation features.</title>
        <authorList>
            <person name="Bienvenut W.V."/>
            <person name="Sumpton D."/>
            <person name="Martinez A."/>
            <person name="Lilla S."/>
            <person name="Espagne C."/>
            <person name="Meinnel T."/>
            <person name="Giglione C."/>
        </authorList>
    </citation>
    <scope>ACETYLATION [LARGE SCALE ANALYSIS] AT THR-2</scope>
    <scope>CLEAVAGE OF INITIATOR METHIONINE [LARGE SCALE ANALYSIS]</scope>
    <scope>IDENTIFICATION BY MASS SPECTROMETRY [LARGE SCALE ANALYSIS]</scope>
</reference>
<name>PRN1_ARATH</name>
<proteinExistence type="evidence at protein level"/>
<keyword id="KW-0938">Abscisic acid signaling pathway</keyword>
<keyword id="KW-0007">Acetylation</keyword>
<keyword id="KW-0539">Nucleus</keyword>
<keyword id="KW-1185">Reference proteome</keyword>